<protein>
    <recommendedName>
        <fullName evidence="4">Secreted RxLR effector protein RXLR-C07</fullName>
    </recommendedName>
</protein>
<dbReference type="EMBL" id="CCYD01000291">
    <property type="protein sequence ID" value="CEG37861.1"/>
    <property type="molecule type" value="Genomic_DNA"/>
</dbReference>
<dbReference type="SMR" id="A0A0P1AAU8"/>
<dbReference type="STRING" id="4781.A0A0P1AAU8"/>
<dbReference type="EnsemblProtists" id="CEG37861">
    <property type="protein sequence ID" value="CEG37861"/>
    <property type="gene ID" value="CEG37861"/>
</dbReference>
<dbReference type="OMA" id="ENSMGYA"/>
<dbReference type="OrthoDB" id="626167at2759"/>
<dbReference type="Proteomes" id="UP000054928">
    <property type="component" value="Unassembled WGS sequence"/>
</dbReference>
<dbReference type="GO" id="GO:0005576">
    <property type="term" value="C:extracellular region"/>
    <property type="evidence" value="ECO:0007669"/>
    <property type="project" value="UniProtKB-SubCell"/>
</dbReference>
<dbReference type="GO" id="GO:0030430">
    <property type="term" value="C:host cell cytoplasm"/>
    <property type="evidence" value="ECO:0007669"/>
    <property type="project" value="UniProtKB-SubCell"/>
</dbReference>
<dbReference type="GO" id="GO:0044196">
    <property type="term" value="C:host cell nucleolus"/>
    <property type="evidence" value="ECO:0007669"/>
    <property type="project" value="UniProtKB-SubCell"/>
</dbReference>
<dbReference type="Gene3D" id="1.25.40.10">
    <property type="entry name" value="Tetratricopeptide repeat domain"/>
    <property type="match status" value="2"/>
</dbReference>
<dbReference type="InterPro" id="IPR011990">
    <property type="entry name" value="TPR-like_helical_dom_sf"/>
</dbReference>
<dbReference type="InterPro" id="IPR019734">
    <property type="entry name" value="TPR_rpt"/>
</dbReference>
<dbReference type="PANTHER" id="PTHR45641">
    <property type="entry name" value="TETRATRICOPEPTIDE REPEAT PROTEIN (AFU_ORTHOLOGUE AFUA_6G03870)"/>
    <property type="match status" value="1"/>
</dbReference>
<dbReference type="Pfam" id="PF13374">
    <property type="entry name" value="TPR_10"/>
    <property type="match status" value="1"/>
</dbReference>
<dbReference type="Pfam" id="PF13424">
    <property type="entry name" value="TPR_12"/>
    <property type="match status" value="1"/>
</dbReference>
<dbReference type="SMART" id="SM00028">
    <property type="entry name" value="TPR"/>
    <property type="match status" value="5"/>
</dbReference>
<dbReference type="SUPFAM" id="SSF48452">
    <property type="entry name" value="TPR-like"/>
    <property type="match status" value="2"/>
</dbReference>
<dbReference type="PROSITE" id="PS50005">
    <property type="entry name" value="TPR"/>
    <property type="match status" value="3"/>
</dbReference>
<name>RLR07_PLAHL</name>
<keyword id="KW-1035">Host cytoplasm</keyword>
<keyword id="KW-1048">Host nucleus</keyword>
<keyword id="KW-1185">Reference proteome</keyword>
<keyword id="KW-0677">Repeat</keyword>
<keyword id="KW-0964">Secreted</keyword>
<keyword id="KW-0732">Signal</keyword>
<keyword id="KW-0802">TPR repeat</keyword>
<keyword id="KW-0843">Virulence</keyword>
<feature type="signal peptide" evidence="1">
    <location>
        <begin position="1"/>
        <end position="19"/>
    </location>
</feature>
<feature type="chain" id="PRO_5006058518" description="Secreted RxLR effector protein RXLR-C07">
    <location>
        <begin position="20"/>
        <end position="325"/>
    </location>
</feature>
<feature type="repeat" description="TPR 1" evidence="2">
    <location>
        <begin position="37"/>
        <end position="75"/>
    </location>
</feature>
<feature type="repeat" description="TPR 2" evidence="2">
    <location>
        <begin position="92"/>
        <end position="125"/>
    </location>
</feature>
<feature type="repeat" description="TPR 3" evidence="2">
    <location>
        <begin position="134"/>
        <end position="167"/>
    </location>
</feature>
<feature type="repeat" description="TPR 4" evidence="2">
    <location>
        <begin position="218"/>
        <end position="251"/>
    </location>
</feature>
<feature type="repeat" description="TPR 5" evidence="2">
    <location>
        <begin position="260"/>
        <end position="293"/>
    </location>
</feature>
<feature type="short sequence motif" description="RxLR-dEER" evidence="6">
    <location>
        <begin position="37"/>
        <end position="75"/>
    </location>
</feature>
<reference key="1">
    <citation type="journal article" date="2015" name="BMC Genomics">
        <title>Genome analyses of the sunflower pathogen Plasmopara halstedii provide insights into effector evolution in downy mildews and Phytophthora.</title>
        <authorList>
            <person name="Sharma R."/>
            <person name="Xia X."/>
            <person name="Cano L.M."/>
            <person name="Evangelisti E."/>
            <person name="Kemen E."/>
            <person name="Judelson H."/>
            <person name="Oome S."/>
            <person name="Sambles C."/>
            <person name="van den Hoogen D.J."/>
            <person name="Kitner M."/>
            <person name="Klein J."/>
            <person name="Meijer H.J."/>
            <person name="Spring O."/>
            <person name="Win J."/>
            <person name="Zipper R."/>
            <person name="Bode H.B."/>
            <person name="Govers F."/>
            <person name="Kamoun S."/>
            <person name="Schornack S."/>
            <person name="Studholme D.J."/>
            <person name="Van den Ackerveken G."/>
            <person name="Thines M."/>
        </authorList>
    </citation>
    <scope>NUCLEOTIDE SEQUENCE [LARGE SCALE GENOMIC DNA]</scope>
</reference>
<reference key="2">
    <citation type="journal article" date="2019" name="Plant J.">
        <title>Sunflower resistance to multiple downy mildew pathotypes revealed by recognition of conserved effectors of the oomycete Plasmopara halstedii.</title>
        <authorList>
            <person name="Pecrix Y."/>
            <person name="Buendia L."/>
            <person name="Penouilh-Suzette C."/>
            <person name="Marechaux M."/>
            <person name="Legrand L."/>
            <person name="Bouchez O."/>
            <person name="Rengel D."/>
            <person name="Gouzy J."/>
            <person name="Cottret L."/>
            <person name="Vear F."/>
            <person name="Godiard L."/>
        </authorList>
    </citation>
    <scope>DOMAIN</scope>
    <scope>INDUCTION</scope>
    <scope>FUNCTION</scope>
    <scope>SUBCELLULAR LOCATION</scope>
</reference>
<accession>A0A0P1AAU8</accession>
<comment type="function">
    <text evidence="3">Secreted effector that suppresses pattern-triggered immunity (PTI) in plant host.</text>
</comment>
<comment type="subcellular location">
    <subcellularLocation>
        <location evidence="3">Secreted</location>
    </subcellularLocation>
    <subcellularLocation>
        <location evidence="3">Host cytoplasm</location>
    </subcellularLocation>
    <subcellularLocation>
        <location evidence="3">Host nucleus</location>
    </subcellularLocation>
    <subcellularLocation>
        <location evidence="3">Host nucleus</location>
        <location evidence="3">Host nucleolus</location>
    </subcellularLocation>
</comment>
<comment type="induction">
    <text evidence="3">Expression is up-regulated during plant colonization, 3 days after infection.</text>
</comment>
<comment type="domain">
    <text evidence="6">The RxLR-dEER motif acts to carry the protein into the host cell cytoplasm through binding to cell surface phosphatidylinositol-3-phosphate.</text>
</comment>
<comment type="similarity">
    <text evidence="5">Belongs to the RxLR effector family.</text>
</comment>
<proteinExistence type="evidence at transcript level"/>
<organism>
    <name type="scientific">Plasmopara halstedii</name>
    <name type="common">Downy mildew of sunflower</name>
    <dbReference type="NCBI Taxonomy" id="4781"/>
    <lineage>
        <taxon>Eukaryota</taxon>
        <taxon>Sar</taxon>
        <taxon>Stramenopiles</taxon>
        <taxon>Oomycota</taxon>
        <taxon>Peronosporales</taxon>
        <taxon>Peronosporaceae</taxon>
        <taxon>Plasmopara</taxon>
    </lineage>
</organism>
<sequence>MQGVRITILWCIVLATIYAEEGPSTPRDDDPVIQKVRGLRNAGMKANDERMFKDAIEKLRHAISLLHNRVFGEERAAIKDPTVISQDAALYAQILNDYGSVLIRTKQYDEAIEVLEDSVAMIEKIYGDSHPSLGLSLRSLADAYMEKKAFKSAIKRYKTLRKHVKKGLGMTHEAYIEASLKIAEGYKKLNKKDTSRKVLKDTLKAQGGEINGLTIGIAELYMELSSAHVEVGEIDDALRAAETASAIFLQREGKDTMAYAFSLNALAGVKMQQKKVDEAIDLLDRAHNIAVSIYGENDRITLASAKTLQDVKDHKMNLLAAKDEL</sequence>
<gene>
    <name evidence="4" type="primary">RXLR-C07</name>
</gene>
<evidence type="ECO:0000255" key="1"/>
<evidence type="ECO:0000255" key="2">
    <source>
        <dbReference type="PROSITE-ProRule" id="PRU00339"/>
    </source>
</evidence>
<evidence type="ECO:0000269" key="3">
    <source>
    </source>
</evidence>
<evidence type="ECO:0000303" key="4">
    <source>
    </source>
</evidence>
<evidence type="ECO:0000305" key="5"/>
<evidence type="ECO:0000305" key="6">
    <source>
    </source>
</evidence>